<sequence>TKASVGFKAGVKDYKLTYYTPDYETKDTDILAAFRVTPQPGVPPEEAGAAVAAESSTGTWTTVWTDGLTSLDRYKGRCYHIEPVVGEENQYIAYVAYPLDLFEEGSVTNMFTSIVGNVFGFKALRALRLEDLRIPPAYSKTFEGPPHGIQSERDKLNKYGRPLLGCTIKPKLGLSAKNYGRACYECLRGGLDFTKDDENVNSQPFMRWRDRFLFCAEALYKAQAETGEIKGHYLNATAGTCEEMIKRAVFARELGVPIVMHDYLTGGFTANTSLAHYCRDNGLLLHIHRAMHAVIDRQKYHGMHFRVLAKALRMSGGDHIHAGTVVGKLEGEREMTLGFVDLLRDDYIEKDRSRGIFFTQDWVSMPGVIPVASGGIHVWHMPALTEIFGDDSVLQFGGGTLGHPWGNAPGAVANRVALEACVQARNEGRDLAREGNEIIREASKWSPELAAACEIWKAIKFEFEPVDKLDIKK</sequence>
<name>RBL_AMOTI</name>
<evidence type="ECO:0000255" key="1">
    <source>
        <dbReference type="HAMAP-Rule" id="MF_01338"/>
    </source>
</evidence>
<comment type="function">
    <text evidence="1">RuBisCO catalyzes two reactions: the carboxylation of D-ribulose 1,5-bisphosphate, the primary event in carbon dioxide fixation, as well as the oxidative fragmentation of the pentose substrate in the photorespiration process. Both reactions occur simultaneously and in competition at the same active site.</text>
</comment>
<comment type="catalytic activity">
    <reaction evidence="1">
        <text>2 (2R)-3-phosphoglycerate + 2 H(+) = D-ribulose 1,5-bisphosphate + CO2 + H2O</text>
        <dbReference type="Rhea" id="RHEA:23124"/>
        <dbReference type="ChEBI" id="CHEBI:15377"/>
        <dbReference type="ChEBI" id="CHEBI:15378"/>
        <dbReference type="ChEBI" id="CHEBI:16526"/>
        <dbReference type="ChEBI" id="CHEBI:57870"/>
        <dbReference type="ChEBI" id="CHEBI:58272"/>
        <dbReference type="EC" id="4.1.1.39"/>
    </reaction>
</comment>
<comment type="catalytic activity">
    <reaction evidence="1">
        <text>D-ribulose 1,5-bisphosphate + O2 = 2-phosphoglycolate + (2R)-3-phosphoglycerate + 2 H(+)</text>
        <dbReference type="Rhea" id="RHEA:36631"/>
        <dbReference type="ChEBI" id="CHEBI:15378"/>
        <dbReference type="ChEBI" id="CHEBI:15379"/>
        <dbReference type="ChEBI" id="CHEBI:57870"/>
        <dbReference type="ChEBI" id="CHEBI:58033"/>
        <dbReference type="ChEBI" id="CHEBI:58272"/>
    </reaction>
</comment>
<comment type="cofactor">
    <cofactor evidence="1">
        <name>Mg(2+)</name>
        <dbReference type="ChEBI" id="CHEBI:18420"/>
    </cofactor>
    <text evidence="1">Binds 1 Mg(2+) ion per subunit.</text>
</comment>
<comment type="subunit">
    <text evidence="1">Heterohexadecamer of 8 large chains and 8 small chains; disulfide-linked. The disulfide link is formed within the large subunit homodimers.</text>
</comment>
<comment type="subcellular location">
    <subcellularLocation>
        <location>Plastid</location>
        <location>Chloroplast</location>
    </subcellularLocation>
</comment>
<comment type="PTM">
    <text evidence="1">The disulfide bond which can form in the large chain dimeric partners within the hexadecamer appears to be associated with oxidative stress and protein turnover.</text>
</comment>
<comment type="miscellaneous">
    <text evidence="1">The basic functional RuBisCO is composed of a large chain homodimer in a 'head-to-tail' conformation. In form I RuBisCO this homodimer is arranged in a barrel-like tetramer with the small subunits forming a tetrameric 'cap' on each end of the 'barrel'.</text>
</comment>
<comment type="similarity">
    <text evidence="1">Belongs to the RuBisCO large chain family. Type I subfamily.</text>
</comment>
<geneLocation type="chloroplast"/>
<feature type="chain" id="PRO_0000062349" description="Ribulose bisphosphate carboxylase large chain">
    <location>
        <begin position="1" status="less than"/>
        <end position="473"/>
    </location>
</feature>
<feature type="active site" description="Proton acceptor" evidence="1">
    <location>
        <position position="169"/>
    </location>
</feature>
<feature type="active site" description="Proton acceptor" evidence="1">
    <location>
        <position position="288"/>
    </location>
</feature>
<feature type="binding site" description="in homodimeric partner" evidence="1">
    <location>
        <position position="117"/>
    </location>
    <ligand>
        <name>substrate</name>
    </ligand>
</feature>
<feature type="binding site" evidence="1">
    <location>
        <position position="167"/>
    </location>
    <ligand>
        <name>substrate</name>
    </ligand>
</feature>
<feature type="binding site" evidence="1">
    <location>
        <position position="171"/>
    </location>
    <ligand>
        <name>substrate</name>
    </ligand>
</feature>
<feature type="binding site" description="via carbamate group" evidence="1">
    <location>
        <position position="195"/>
    </location>
    <ligand>
        <name>Mg(2+)</name>
        <dbReference type="ChEBI" id="CHEBI:18420"/>
    </ligand>
</feature>
<feature type="binding site" evidence="1">
    <location>
        <position position="197"/>
    </location>
    <ligand>
        <name>Mg(2+)</name>
        <dbReference type="ChEBI" id="CHEBI:18420"/>
    </ligand>
</feature>
<feature type="binding site" evidence="1">
    <location>
        <position position="198"/>
    </location>
    <ligand>
        <name>Mg(2+)</name>
        <dbReference type="ChEBI" id="CHEBI:18420"/>
    </ligand>
</feature>
<feature type="binding site" evidence="1">
    <location>
        <position position="289"/>
    </location>
    <ligand>
        <name>substrate</name>
    </ligand>
</feature>
<feature type="binding site" evidence="1">
    <location>
        <position position="321"/>
    </location>
    <ligand>
        <name>substrate</name>
    </ligand>
</feature>
<feature type="binding site" evidence="1">
    <location>
        <position position="373"/>
    </location>
    <ligand>
        <name>substrate</name>
    </ligand>
</feature>
<feature type="site" description="Transition state stabilizer" evidence="1">
    <location>
        <position position="328"/>
    </location>
</feature>
<feature type="modified residue" description="N6,N6,N6-trimethyllysine" evidence="1">
    <location>
        <position position="8"/>
    </location>
</feature>
<feature type="modified residue" description="N6-carboxylysine" evidence="1">
    <location>
        <position position="195"/>
    </location>
</feature>
<feature type="disulfide bond" description="Interchain; in linked form" evidence="1">
    <location>
        <position position="241"/>
    </location>
</feature>
<feature type="non-terminal residue">
    <location>
        <position position="1"/>
    </location>
</feature>
<reference key="1">
    <citation type="journal article" date="2004" name="Mol. Phylogenet. Evol.">
        <title>Potential phylogenetic utility of the nuclear FLORICAULA/LEAFY second intron: comparison with three chloroplast DNA regions in Amorphophallus (Araceae).</title>
        <authorList>
            <person name="Grob G.B.J."/>
            <person name="Gravendeel B."/>
            <person name="Eurlings M.C.M."/>
        </authorList>
    </citation>
    <scope>NUCLEOTIDE SEQUENCE [GENOMIC DNA]</scope>
</reference>
<protein>
    <recommendedName>
        <fullName evidence="1">Ribulose bisphosphate carboxylase large chain</fullName>
        <shortName evidence="1">RuBisCO large subunit</shortName>
        <ecNumber evidence="1">4.1.1.39</ecNumber>
    </recommendedName>
</protein>
<dbReference type="EC" id="4.1.1.39" evidence="1"/>
<dbReference type="EMBL" id="AF497102">
    <property type="protein sequence ID" value="AAM74126.1"/>
    <property type="molecule type" value="Genomic_DNA"/>
</dbReference>
<dbReference type="SMR" id="Q8MD78"/>
<dbReference type="GO" id="GO:0009507">
    <property type="term" value="C:chloroplast"/>
    <property type="evidence" value="ECO:0007669"/>
    <property type="project" value="UniProtKB-SubCell"/>
</dbReference>
<dbReference type="GO" id="GO:0000287">
    <property type="term" value="F:magnesium ion binding"/>
    <property type="evidence" value="ECO:0007669"/>
    <property type="project" value="InterPro"/>
</dbReference>
<dbReference type="GO" id="GO:0004497">
    <property type="term" value="F:monooxygenase activity"/>
    <property type="evidence" value="ECO:0007669"/>
    <property type="project" value="UniProtKB-KW"/>
</dbReference>
<dbReference type="GO" id="GO:0016984">
    <property type="term" value="F:ribulose-bisphosphate carboxylase activity"/>
    <property type="evidence" value="ECO:0007669"/>
    <property type="project" value="UniProtKB-EC"/>
</dbReference>
<dbReference type="GO" id="GO:0009853">
    <property type="term" value="P:photorespiration"/>
    <property type="evidence" value="ECO:0007669"/>
    <property type="project" value="UniProtKB-KW"/>
</dbReference>
<dbReference type="GO" id="GO:0019253">
    <property type="term" value="P:reductive pentose-phosphate cycle"/>
    <property type="evidence" value="ECO:0007669"/>
    <property type="project" value="UniProtKB-KW"/>
</dbReference>
<dbReference type="CDD" id="cd08212">
    <property type="entry name" value="RuBisCO_large_I"/>
    <property type="match status" value="1"/>
</dbReference>
<dbReference type="FunFam" id="3.20.20.110:FF:000001">
    <property type="entry name" value="Ribulose bisphosphate carboxylase large chain"/>
    <property type="match status" value="1"/>
</dbReference>
<dbReference type="FunFam" id="3.30.70.150:FF:000001">
    <property type="entry name" value="Ribulose bisphosphate carboxylase large chain"/>
    <property type="match status" value="1"/>
</dbReference>
<dbReference type="Gene3D" id="3.20.20.110">
    <property type="entry name" value="Ribulose bisphosphate carboxylase, large subunit, C-terminal domain"/>
    <property type="match status" value="1"/>
</dbReference>
<dbReference type="Gene3D" id="3.30.70.150">
    <property type="entry name" value="RuBisCO large subunit, N-terminal domain"/>
    <property type="match status" value="1"/>
</dbReference>
<dbReference type="HAMAP" id="MF_01338">
    <property type="entry name" value="RuBisCO_L_type1"/>
    <property type="match status" value="1"/>
</dbReference>
<dbReference type="InterPro" id="IPR033966">
    <property type="entry name" value="RuBisCO"/>
</dbReference>
<dbReference type="InterPro" id="IPR020878">
    <property type="entry name" value="RuBisCo_large_chain_AS"/>
</dbReference>
<dbReference type="InterPro" id="IPR000685">
    <property type="entry name" value="RuBisCO_lsu_C"/>
</dbReference>
<dbReference type="InterPro" id="IPR036376">
    <property type="entry name" value="RuBisCO_lsu_C_sf"/>
</dbReference>
<dbReference type="InterPro" id="IPR017443">
    <property type="entry name" value="RuBisCO_lsu_fd_N"/>
</dbReference>
<dbReference type="InterPro" id="IPR036422">
    <property type="entry name" value="RuBisCO_lsu_N_sf"/>
</dbReference>
<dbReference type="InterPro" id="IPR020888">
    <property type="entry name" value="RuBisCO_lsuI"/>
</dbReference>
<dbReference type="NCBIfam" id="NF003252">
    <property type="entry name" value="PRK04208.1"/>
    <property type="match status" value="1"/>
</dbReference>
<dbReference type="PANTHER" id="PTHR42704">
    <property type="entry name" value="RIBULOSE BISPHOSPHATE CARBOXYLASE"/>
    <property type="match status" value="1"/>
</dbReference>
<dbReference type="PANTHER" id="PTHR42704:SF15">
    <property type="entry name" value="RIBULOSE BISPHOSPHATE CARBOXYLASE LARGE CHAIN"/>
    <property type="match status" value="1"/>
</dbReference>
<dbReference type="Pfam" id="PF00016">
    <property type="entry name" value="RuBisCO_large"/>
    <property type="match status" value="1"/>
</dbReference>
<dbReference type="Pfam" id="PF02788">
    <property type="entry name" value="RuBisCO_large_N"/>
    <property type="match status" value="1"/>
</dbReference>
<dbReference type="SFLD" id="SFLDG01052">
    <property type="entry name" value="RuBisCO"/>
    <property type="match status" value="1"/>
</dbReference>
<dbReference type="SFLD" id="SFLDS00014">
    <property type="entry name" value="RuBisCO"/>
    <property type="match status" value="1"/>
</dbReference>
<dbReference type="SFLD" id="SFLDG00301">
    <property type="entry name" value="RuBisCO-like_proteins"/>
    <property type="match status" value="1"/>
</dbReference>
<dbReference type="SUPFAM" id="SSF51649">
    <property type="entry name" value="RuBisCo, C-terminal domain"/>
    <property type="match status" value="1"/>
</dbReference>
<dbReference type="SUPFAM" id="SSF54966">
    <property type="entry name" value="RuBisCO, large subunit, small (N-terminal) domain"/>
    <property type="match status" value="1"/>
</dbReference>
<dbReference type="PROSITE" id="PS00157">
    <property type="entry name" value="RUBISCO_LARGE"/>
    <property type="match status" value="1"/>
</dbReference>
<gene>
    <name evidence="1" type="primary">rbcL</name>
</gene>
<organism>
    <name type="scientific">Amorphophallus titanum</name>
    <name type="common">Titan arum</name>
    <name type="synonym">Conophallus titanum</name>
    <dbReference type="NCBI Taxonomy" id="175755"/>
    <lineage>
        <taxon>Eukaryota</taxon>
        <taxon>Viridiplantae</taxon>
        <taxon>Streptophyta</taxon>
        <taxon>Embryophyta</taxon>
        <taxon>Tracheophyta</taxon>
        <taxon>Spermatophyta</taxon>
        <taxon>Magnoliopsida</taxon>
        <taxon>Liliopsida</taxon>
        <taxon>Araceae</taxon>
        <taxon>Aroideae</taxon>
        <taxon>Thomsonieae</taxon>
        <taxon>Amorphophallus</taxon>
    </lineage>
</organism>
<accession>Q8MD78</accession>
<proteinExistence type="inferred from homology"/>
<keyword id="KW-0113">Calvin cycle</keyword>
<keyword id="KW-0120">Carbon dioxide fixation</keyword>
<keyword id="KW-0150">Chloroplast</keyword>
<keyword id="KW-1015">Disulfide bond</keyword>
<keyword id="KW-0456">Lyase</keyword>
<keyword id="KW-0460">Magnesium</keyword>
<keyword id="KW-0479">Metal-binding</keyword>
<keyword id="KW-0488">Methylation</keyword>
<keyword id="KW-0503">Monooxygenase</keyword>
<keyword id="KW-0560">Oxidoreductase</keyword>
<keyword id="KW-0601">Photorespiration</keyword>
<keyword id="KW-0602">Photosynthesis</keyword>
<keyword id="KW-0934">Plastid</keyword>